<keyword id="KW-0974">Archaeal flagellum</keyword>
<keyword id="KW-1003">Cell membrane</keyword>
<keyword id="KW-0472">Membrane</keyword>
<keyword id="KW-1185">Reference proteome</keyword>
<keyword id="KW-0812">Transmembrane</keyword>
<keyword id="KW-1133">Transmembrane helix</keyword>
<proteinExistence type="predicted"/>
<organism>
    <name type="scientific">Methanocaldococcus jannaschii (strain ATCC 43067 / DSM 2661 / JAL-1 / JCM 10045 / NBRC 100440)</name>
    <name type="common">Methanococcus jannaschii</name>
    <dbReference type="NCBI Taxonomy" id="243232"/>
    <lineage>
        <taxon>Archaea</taxon>
        <taxon>Methanobacteriati</taxon>
        <taxon>Methanobacteriota</taxon>
        <taxon>Methanomada group</taxon>
        <taxon>Methanococci</taxon>
        <taxon>Methanococcales</taxon>
        <taxon>Methanocaldococcaceae</taxon>
        <taxon>Methanocaldococcus</taxon>
    </lineage>
</organism>
<dbReference type="EMBL" id="L77117">
    <property type="protein sequence ID" value="AAB98904.1"/>
    <property type="molecule type" value="Genomic_DNA"/>
</dbReference>
<dbReference type="PIR" id="E64412">
    <property type="entry name" value="E64412"/>
</dbReference>
<dbReference type="SMR" id="Q58311"/>
<dbReference type="FunCoup" id="Q58311">
    <property type="interactions" value="3"/>
</dbReference>
<dbReference type="STRING" id="243232.MJ_0901"/>
<dbReference type="PaxDb" id="243232-MJ_0901"/>
<dbReference type="EnsemblBacteria" id="AAB98904">
    <property type="protein sequence ID" value="AAB98904"/>
    <property type="gene ID" value="MJ_0901"/>
</dbReference>
<dbReference type="KEGG" id="mja:MJ_0901"/>
<dbReference type="eggNOG" id="arCOG01809">
    <property type="taxonomic scope" value="Archaea"/>
</dbReference>
<dbReference type="HOGENOM" id="CLU_479528_0_0_2"/>
<dbReference type="InParanoid" id="Q58311"/>
<dbReference type="PhylomeDB" id="Q58311"/>
<dbReference type="Proteomes" id="UP000000805">
    <property type="component" value="Chromosome"/>
</dbReference>
<dbReference type="GO" id="GO:0097589">
    <property type="term" value="C:archaeal-type flagellum"/>
    <property type="evidence" value="ECO:0007669"/>
    <property type="project" value="UniProtKB-SubCell"/>
</dbReference>
<dbReference type="GO" id="GO:0005886">
    <property type="term" value="C:plasma membrane"/>
    <property type="evidence" value="ECO:0007669"/>
    <property type="project" value="UniProtKB-SubCell"/>
</dbReference>
<dbReference type="InterPro" id="IPR056569">
    <property type="entry name" value="ArlJ-like"/>
</dbReference>
<dbReference type="InterPro" id="IPR018076">
    <property type="entry name" value="T2SS_GspF_dom"/>
</dbReference>
<dbReference type="NCBIfam" id="NF004704">
    <property type="entry name" value="PRK06041.1-2"/>
    <property type="match status" value="1"/>
</dbReference>
<dbReference type="PANTHER" id="PTHR35402:SF2">
    <property type="entry name" value="FLAGELLA ACCESSORY PROTEIN J"/>
    <property type="match status" value="1"/>
</dbReference>
<dbReference type="PANTHER" id="PTHR35402">
    <property type="entry name" value="INTEGRAL MEMBRANE PROTEIN-RELATED"/>
    <property type="match status" value="1"/>
</dbReference>
<dbReference type="Pfam" id="PF00482">
    <property type="entry name" value="T2SSF"/>
    <property type="match status" value="2"/>
</dbReference>
<reference key="1">
    <citation type="journal article" date="1996" name="Science">
        <title>Complete genome sequence of the methanogenic archaeon, Methanococcus jannaschii.</title>
        <authorList>
            <person name="Bult C.J."/>
            <person name="White O."/>
            <person name="Olsen G.J."/>
            <person name="Zhou L."/>
            <person name="Fleischmann R.D."/>
            <person name="Sutton G.G."/>
            <person name="Blake J.A."/>
            <person name="FitzGerald L.M."/>
            <person name="Clayton R.A."/>
            <person name="Gocayne J.D."/>
            <person name="Kerlavage A.R."/>
            <person name="Dougherty B.A."/>
            <person name="Tomb J.-F."/>
            <person name="Adams M.D."/>
            <person name="Reich C.I."/>
            <person name="Overbeek R."/>
            <person name="Kirkness E.F."/>
            <person name="Weinstock K.G."/>
            <person name="Merrick J.M."/>
            <person name="Glodek A."/>
            <person name="Scott J.L."/>
            <person name="Geoghagen N.S.M."/>
            <person name="Weidman J.F."/>
            <person name="Fuhrmann J.L."/>
            <person name="Nguyen D."/>
            <person name="Utterback T.R."/>
            <person name="Kelley J.M."/>
            <person name="Peterson J.D."/>
            <person name="Sadow P.W."/>
            <person name="Hanna M.C."/>
            <person name="Cotton M.D."/>
            <person name="Roberts K.M."/>
            <person name="Hurst M.A."/>
            <person name="Kaine B.P."/>
            <person name="Borodovsky M."/>
            <person name="Klenk H.-P."/>
            <person name="Fraser C.M."/>
            <person name="Smith H.O."/>
            <person name="Woese C.R."/>
            <person name="Venter J.C."/>
        </authorList>
    </citation>
    <scope>NUCLEOTIDE SEQUENCE [LARGE SCALE GENOMIC DNA]</scope>
    <source>
        <strain>ATCC 43067 / DSM 2661 / JAL-1 / JCM 10045 / NBRC 100440</strain>
    </source>
</reference>
<feature type="chain" id="PRO_0000087280" description="Flagella accessory protein J">
    <location>
        <begin position="1"/>
        <end position="562"/>
    </location>
</feature>
<feature type="transmembrane region" description="Helical" evidence="1">
    <location>
        <begin position="32"/>
        <end position="52"/>
    </location>
</feature>
<feature type="transmembrane region" description="Helical" evidence="1">
    <location>
        <begin position="53"/>
        <end position="73"/>
    </location>
</feature>
<feature type="transmembrane region" description="Helical" evidence="1">
    <location>
        <begin position="199"/>
        <end position="219"/>
    </location>
</feature>
<feature type="transmembrane region" description="Helical" evidence="1">
    <location>
        <begin position="225"/>
        <end position="245"/>
    </location>
</feature>
<feature type="transmembrane region" description="Helical" evidence="1">
    <location>
        <begin position="273"/>
        <end position="293"/>
    </location>
</feature>
<feature type="transmembrane region" description="Helical" evidence="1">
    <location>
        <begin position="302"/>
        <end position="322"/>
    </location>
</feature>
<feature type="transmembrane region" description="Helical" evidence="1">
    <location>
        <begin position="446"/>
        <end position="466"/>
    </location>
</feature>
<feature type="transmembrane region" description="Helical" evidence="1">
    <location>
        <begin position="498"/>
        <end position="518"/>
    </location>
</feature>
<feature type="transmembrane region" description="Helical" evidence="1">
    <location>
        <begin position="527"/>
        <end position="547"/>
    </location>
</feature>
<accession>Q58311</accession>
<gene>
    <name type="primary">flaJ</name>
    <name type="ordered locus">MJ0901</name>
</gene>
<sequence length="562" mass="63601">MVIVVFDLLPRVGLKPRDYLLRIVLPALITSIVLILLGFMLFSGIILYIYLLLPIIILVSAIGYPYIALDSQKNKINERLHIFITKFGTLSITDLNRKDLLKILSEEREELGELAKESEKLYVLTDKWGRSLAEACRFLAQRTPSSEFADFLDRLAYALDSGEELKEFLIKEQDIVMDDYAAFYKRMLYSLDMYKELYVSAMTSIAFFLAFSILVPFLLPYNFVFMATIALFAFFAVELLIVVVIRNRLPFDRLWHTGEKPTETDIKLRKWLIISVILVVILLPFLLWAKYIVGLSPFSQMPYMILVALGFTPLAIGGFVALKEEEKVKRKEFVFPDFLRSLGDSVSAKGGGMVSSLEYLSNHDFGPLTHDIKRLYKRLALGIDSNKSWRLFGFDSCSYLIQLFSDIFSRCIYFGGDPKTAAEIISKNFRKIVQLRKSKYQNIQQFVGVVYGLGGGLALALFASLGVAKMINDLYSSLSIPETVIHILNIAPISNVDVVEYIIFGSLIVYSIISAILIKIMDGGHKFVSLLHFVAILWICAIVAYITKLIVSQVLGVSVPLY</sequence>
<evidence type="ECO:0000255" key="1"/>
<evidence type="ECO:0000305" key="2"/>
<protein>
    <recommendedName>
        <fullName>Flagella accessory protein J</fullName>
    </recommendedName>
</protein>
<name>FLAJ_METJA</name>
<comment type="subcellular location">
    <subcellularLocation>
        <location evidence="2">Cell membrane</location>
        <topology evidence="2">Multi-pass membrane protein</topology>
    </subcellularLocation>
    <subcellularLocation>
        <location evidence="2">Archaeal flagellum</location>
    </subcellularLocation>
</comment>
<comment type="similarity">
    <text evidence="2">To M.voltae FlaJ.</text>
</comment>
<comment type="similarity">
    <text evidence="2">To M.jannaschii MJ1286.</text>
</comment>